<gene>
    <name type="ORF">ZK637.14</name>
</gene>
<proteinExistence type="predicted"/>
<name>YOUD_CAEEL</name>
<protein>
    <recommendedName>
        <fullName>Uncharacterized RING finger protein ZK637.14</fullName>
    </recommendedName>
</protein>
<sequence length="161" mass="18847">MSERDAIRAFSHMLETIFVRMRAEGTGSQTDAMQRWLDLYNVGSLPIDKKSYKALRLMDRETTDQQKEDATCAICLDNLQNNVDIPEDHVIKEELKIDPTTFGTTVIVMPCKHRFHYFCLTLWLEAQQTCPTCRQKVKTDKEVEEEERQRNLEELHDSMYG</sequence>
<keyword id="KW-0479">Metal-binding</keyword>
<keyword id="KW-1185">Reference proteome</keyword>
<keyword id="KW-0862">Zinc</keyword>
<keyword id="KW-0863">Zinc-finger</keyword>
<feature type="chain" id="PRO_0000056329" description="Uncharacterized RING finger protein ZK637.14">
    <location>
        <begin position="1"/>
        <end position="161"/>
    </location>
</feature>
<feature type="zinc finger region" description="RING-type" evidence="1">
    <location>
        <begin position="72"/>
        <end position="134"/>
    </location>
</feature>
<feature type="region of interest" description="Disordered" evidence="2">
    <location>
        <begin position="140"/>
        <end position="161"/>
    </location>
</feature>
<accession>P30631</accession>
<dbReference type="EMBL" id="Z11115">
    <property type="protein sequence ID" value="CAA77447.1"/>
    <property type="molecule type" value="Genomic_DNA"/>
</dbReference>
<dbReference type="PIR" id="E88541">
    <property type="entry name" value="E88541"/>
</dbReference>
<dbReference type="PIR" id="S15788">
    <property type="entry name" value="S15788"/>
</dbReference>
<dbReference type="RefSeq" id="NP_498962.1">
    <property type="nucleotide sequence ID" value="NM_066561.5"/>
</dbReference>
<dbReference type="BioGRID" id="41452">
    <property type="interactions" value="1"/>
</dbReference>
<dbReference type="FunCoup" id="P30631">
    <property type="interactions" value="3"/>
</dbReference>
<dbReference type="STRING" id="6239.ZK637.14.1"/>
<dbReference type="PaxDb" id="6239-ZK637.14"/>
<dbReference type="PeptideAtlas" id="P30631"/>
<dbReference type="EnsemblMetazoa" id="ZK637.14.1">
    <property type="protein sequence ID" value="ZK637.14.1"/>
    <property type="gene ID" value="WBGene00014031"/>
</dbReference>
<dbReference type="GeneID" id="176251"/>
<dbReference type="KEGG" id="cel:CELE_ZK637.14"/>
<dbReference type="UCSC" id="ZK637.14">
    <property type="organism name" value="c. elegans"/>
</dbReference>
<dbReference type="AGR" id="WB:WBGene00014031"/>
<dbReference type="CTD" id="176251"/>
<dbReference type="WormBase" id="ZK637.14">
    <property type="protein sequence ID" value="CE00432"/>
    <property type="gene ID" value="WBGene00014031"/>
</dbReference>
<dbReference type="eggNOG" id="KOG0800">
    <property type="taxonomic scope" value="Eukaryota"/>
</dbReference>
<dbReference type="HOGENOM" id="CLU_1636923_0_0_1"/>
<dbReference type="InParanoid" id="P30631"/>
<dbReference type="OMA" id="HYFCLTL"/>
<dbReference type="OrthoDB" id="5772480at2759"/>
<dbReference type="PhylomeDB" id="P30631"/>
<dbReference type="PRO" id="PR:P30631"/>
<dbReference type="Proteomes" id="UP000001940">
    <property type="component" value="Chromosome III"/>
</dbReference>
<dbReference type="Bgee" id="WBGene00014031">
    <property type="expression patterns" value="Expressed in embryo and 4 other cell types or tissues"/>
</dbReference>
<dbReference type="GO" id="GO:0008270">
    <property type="term" value="F:zinc ion binding"/>
    <property type="evidence" value="ECO:0007669"/>
    <property type="project" value="UniProtKB-KW"/>
</dbReference>
<dbReference type="CDD" id="cd16473">
    <property type="entry name" value="RING-H2_RNF103"/>
    <property type="match status" value="1"/>
</dbReference>
<dbReference type="Gene3D" id="3.30.40.10">
    <property type="entry name" value="Zinc/RING finger domain, C3HC4 (zinc finger)"/>
    <property type="match status" value="1"/>
</dbReference>
<dbReference type="InterPro" id="IPR050731">
    <property type="entry name" value="HRD1_E3_ubiq-ligases"/>
</dbReference>
<dbReference type="InterPro" id="IPR001841">
    <property type="entry name" value="Znf_RING"/>
</dbReference>
<dbReference type="InterPro" id="IPR013083">
    <property type="entry name" value="Znf_RING/FYVE/PHD"/>
</dbReference>
<dbReference type="PANTHER" id="PTHR22763">
    <property type="entry name" value="RING ZINC FINGER PROTEIN"/>
    <property type="match status" value="1"/>
</dbReference>
<dbReference type="Pfam" id="PF13639">
    <property type="entry name" value="zf-RING_2"/>
    <property type="match status" value="1"/>
</dbReference>
<dbReference type="SMART" id="SM00184">
    <property type="entry name" value="RING"/>
    <property type="match status" value="1"/>
</dbReference>
<dbReference type="SUPFAM" id="SSF57850">
    <property type="entry name" value="RING/U-box"/>
    <property type="match status" value="1"/>
</dbReference>
<dbReference type="PROSITE" id="PS50089">
    <property type="entry name" value="ZF_RING_2"/>
    <property type="match status" value="1"/>
</dbReference>
<reference key="1">
    <citation type="journal article" date="1992" name="Nature">
        <title>The C. elegans genome sequencing project: a beginning.</title>
        <authorList>
            <person name="Sulston J."/>
            <person name="Du Z."/>
            <person name="Thomas K."/>
            <person name="Wilson R."/>
            <person name="Hillier L."/>
            <person name="Staden R."/>
            <person name="Halloran N."/>
            <person name="Green P."/>
            <person name="Thierry-Mieg J."/>
            <person name="Qiu L."/>
            <person name="Dear S."/>
            <person name="Coulson A."/>
            <person name="Craxton M."/>
            <person name="Durbin R."/>
            <person name="Berks M."/>
            <person name="Metzstein M."/>
            <person name="Hawkins T."/>
            <person name="Ainscough R."/>
            <person name="Waterston R."/>
        </authorList>
    </citation>
    <scope>NUCLEOTIDE SEQUENCE [LARGE SCALE GENOMIC DNA]</scope>
    <source>
        <strain>Bristol N2</strain>
    </source>
</reference>
<reference key="2">
    <citation type="journal article" date="1998" name="Science">
        <title>Genome sequence of the nematode C. elegans: a platform for investigating biology.</title>
        <authorList>
            <consortium name="The C. elegans sequencing consortium"/>
        </authorList>
    </citation>
    <scope>NUCLEOTIDE SEQUENCE [LARGE SCALE GENOMIC DNA]</scope>
    <source>
        <strain>Bristol N2</strain>
    </source>
</reference>
<organism>
    <name type="scientific">Caenorhabditis elegans</name>
    <dbReference type="NCBI Taxonomy" id="6239"/>
    <lineage>
        <taxon>Eukaryota</taxon>
        <taxon>Metazoa</taxon>
        <taxon>Ecdysozoa</taxon>
        <taxon>Nematoda</taxon>
        <taxon>Chromadorea</taxon>
        <taxon>Rhabditida</taxon>
        <taxon>Rhabditina</taxon>
        <taxon>Rhabditomorpha</taxon>
        <taxon>Rhabditoidea</taxon>
        <taxon>Rhabditidae</taxon>
        <taxon>Peloderinae</taxon>
        <taxon>Caenorhabditis</taxon>
    </lineage>
</organism>
<evidence type="ECO:0000255" key="1">
    <source>
        <dbReference type="PROSITE-ProRule" id="PRU00175"/>
    </source>
</evidence>
<evidence type="ECO:0000256" key="2">
    <source>
        <dbReference type="SAM" id="MobiDB-lite"/>
    </source>
</evidence>